<accession>Q1XDK2</accession>
<accession>Q000I4</accession>
<organism>
    <name type="scientific">Pyropia yezoensis</name>
    <name type="common">Susabi-nori</name>
    <name type="synonym">Porphyra yezoensis</name>
    <dbReference type="NCBI Taxonomy" id="2788"/>
    <lineage>
        <taxon>Eukaryota</taxon>
        <taxon>Rhodophyta</taxon>
        <taxon>Bangiophyceae</taxon>
        <taxon>Bangiales</taxon>
        <taxon>Bangiaceae</taxon>
        <taxon>Pyropia</taxon>
    </lineage>
</organism>
<feature type="chain" id="PRO_0000237127" description="Small ribosomal subunit protein uS10c">
    <location>
        <begin position="1"/>
        <end position="105"/>
    </location>
</feature>
<feature type="sequence conflict" description="In Ref. 2; ABJ51877." evidence="2" ref="2">
    <original>D</original>
    <variation>N</variation>
    <location>
        <position position="61"/>
    </location>
</feature>
<protein>
    <recommendedName>
        <fullName evidence="1">Small ribosomal subunit protein uS10c</fullName>
    </recommendedName>
    <alternativeName>
        <fullName evidence="2">30S ribosomal protein S10, chloroplastic</fullName>
    </alternativeName>
</protein>
<gene>
    <name evidence="1" type="primary">rps10</name>
</gene>
<sequence>MTITQQTKIRIKLKAYNSIILNTSCDKILDTASRTNAVAVGPIPLPTKRRIYCVLRSPHVDKDSREHFEIRSHRRIIDIHQPSSQTIDALMKLNLPSGVDIEVKL</sequence>
<name>RR10_PYRYE</name>
<proteinExistence type="inferred from homology"/>
<comment type="function">
    <text evidence="1">Involved in the binding of tRNA to the ribosomes.</text>
</comment>
<comment type="subunit">
    <text evidence="1">Part of the 30S ribosomal subunit.</text>
</comment>
<comment type="subcellular location">
    <subcellularLocation>
        <location evidence="1">Plastid</location>
        <location evidence="1">Chloroplast</location>
    </subcellularLocation>
</comment>
<comment type="similarity">
    <text evidence="1">Belongs to the universal ribosomal protein uS10 family.</text>
</comment>
<reference key="1">
    <citation type="submission" date="2003-11" db="EMBL/GenBank/DDBJ databases">
        <title>Whole genome sequence of Porphyra yezoensis chloroplast.</title>
        <authorList>
            <person name="Kunimoto M."/>
            <person name="Morishima K."/>
            <person name="Yoshikawa M."/>
            <person name="Fukuda S."/>
            <person name="Kobayashi T."/>
            <person name="Kobayashi M."/>
            <person name="Okazaki T."/>
            <person name="Ohara I."/>
            <person name="Nakayama I."/>
        </authorList>
    </citation>
    <scope>NUCLEOTIDE SEQUENCE [LARGE SCALE GENOMIC DNA]</scope>
    <source>
        <strain>U-51</strain>
    </source>
</reference>
<reference key="2">
    <citation type="submission" date="2006-09" db="EMBL/GenBank/DDBJ databases">
        <title>Cloning and analyzing of Porphyra yezoensis gene for 30S ribosomal protein S10.</title>
        <authorList>
            <person name="Wang M.Q."/>
            <person name="Mao Y.X."/>
        </authorList>
    </citation>
    <scope>NUCLEOTIDE SEQUENCE [GENOMIC DNA] OF 1-64</scope>
    <source>
        <strain>Qingdao</strain>
    </source>
</reference>
<keyword id="KW-0150">Chloroplast</keyword>
<keyword id="KW-0934">Plastid</keyword>
<keyword id="KW-0687">Ribonucleoprotein</keyword>
<keyword id="KW-0689">Ribosomal protein</keyword>
<dbReference type="EMBL" id="AP006715">
    <property type="protein sequence ID" value="BAE92409.1"/>
    <property type="molecule type" value="Genomic_DNA"/>
</dbReference>
<dbReference type="EMBL" id="DQ988111">
    <property type="protein sequence ID" value="ABJ51877.1"/>
    <property type="molecule type" value="Genomic_DNA"/>
</dbReference>
<dbReference type="RefSeq" id="YP_536966.1">
    <property type="nucleotide sequence ID" value="NC_007932.1"/>
</dbReference>
<dbReference type="SMR" id="Q1XDK2"/>
<dbReference type="GeneID" id="3978737"/>
<dbReference type="GO" id="GO:0009507">
    <property type="term" value="C:chloroplast"/>
    <property type="evidence" value="ECO:0007669"/>
    <property type="project" value="UniProtKB-SubCell"/>
</dbReference>
<dbReference type="GO" id="GO:1990904">
    <property type="term" value="C:ribonucleoprotein complex"/>
    <property type="evidence" value="ECO:0007669"/>
    <property type="project" value="UniProtKB-KW"/>
</dbReference>
<dbReference type="GO" id="GO:0005840">
    <property type="term" value="C:ribosome"/>
    <property type="evidence" value="ECO:0007669"/>
    <property type="project" value="UniProtKB-KW"/>
</dbReference>
<dbReference type="GO" id="GO:0003735">
    <property type="term" value="F:structural constituent of ribosome"/>
    <property type="evidence" value="ECO:0007669"/>
    <property type="project" value="InterPro"/>
</dbReference>
<dbReference type="GO" id="GO:0000049">
    <property type="term" value="F:tRNA binding"/>
    <property type="evidence" value="ECO:0007669"/>
    <property type="project" value="UniProtKB-UniRule"/>
</dbReference>
<dbReference type="GO" id="GO:0006412">
    <property type="term" value="P:translation"/>
    <property type="evidence" value="ECO:0007669"/>
    <property type="project" value="UniProtKB-UniRule"/>
</dbReference>
<dbReference type="FunFam" id="3.30.70.600:FF:000003">
    <property type="entry name" value="30S ribosomal protein S10"/>
    <property type="match status" value="1"/>
</dbReference>
<dbReference type="Gene3D" id="3.30.70.600">
    <property type="entry name" value="Ribosomal protein S10 domain"/>
    <property type="match status" value="1"/>
</dbReference>
<dbReference type="HAMAP" id="MF_00508">
    <property type="entry name" value="Ribosomal_uS10"/>
    <property type="match status" value="1"/>
</dbReference>
<dbReference type="InterPro" id="IPR001848">
    <property type="entry name" value="Ribosomal_uS10"/>
</dbReference>
<dbReference type="InterPro" id="IPR018268">
    <property type="entry name" value="Ribosomal_uS10_CS"/>
</dbReference>
<dbReference type="InterPro" id="IPR027486">
    <property type="entry name" value="Ribosomal_uS10_dom"/>
</dbReference>
<dbReference type="InterPro" id="IPR036838">
    <property type="entry name" value="Ribosomal_uS10_dom_sf"/>
</dbReference>
<dbReference type="NCBIfam" id="NF001861">
    <property type="entry name" value="PRK00596.1"/>
    <property type="match status" value="1"/>
</dbReference>
<dbReference type="NCBIfam" id="TIGR01049">
    <property type="entry name" value="rpsJ_bact"/>
    <property type="match status" value="1"/>
</dbReference>
<dbReference type="PANTHER" id="PTHR11700">
    <property type="entry name" value="30S RIBOSOMAL PROTEIN S10 FAMILY MEMBER"/>
    <property type="match status" value="1"/>
</dbReference>
<dbReference type="Pfam" id="PF00338">
    <property type="entry name" value="Ribosomal_S10"/>
    <property type="match status" value="1"/>
</dbReference>
<dbReference type="PRINTS" id="PR00971">
    <property type="entry name" value="RIBOSOMALS10"/>
</dbReference>
<dbReference type="SMART" id="SM01403">
    <property type="entry name" value="Ribosomal_S10"/>
    <property type="match status" value="1"/>
</dbReference>
<dbReference type="SUPFAM" id="SSF54999">
    <property type="entry name" value="Ribosomal protein S10"/>
    <property type="match status" value="1"/>
</dbReference>
<dbReference type="PROSITE" id="PS00361">
    <property type="entry name" value="RIBOSOMAL_S10"/>
    <property type="match status" value="1"/>
</dbReference>
<geneLocation type="chloroplast"/>
<evidence type="ECO:0000255" key="1">
    <source>
        <dbReference type="HAMAP-Rule" id="MF_00508"/>
    </source>
</evidence>
<evidence type="ECO:0000305" key="2"/>